<reference key="1">
    <citation type="journal article" date="1995" name="DNA Res.">
        <title>Sequence analysis of the genome of the unicellular cyanobacterium Synechocystis sp. strain PCC6803. I. Sequence features in the 1 Mb region from map positions 64% to 92% of the genome.</title>
        <authorList>
            <person name="Kaneko T."/>
            <person name="Tanaka A."/>
            <person name="Sato S."/>
            <person name="Kotani H."/>
            <person name="Sazuka T."/>
            <person name="Miyajima N."/>
            <person name="Sugiura M."/>
            <person name="Tabata S."/>
        </authorList>
    </citation>
    <scope>NUCLEOTIDE SEQUENCE [LARGE SCALE GENOMIC DNA]</scope>
    <source>
        <strain>ATCC 27184 / PCC 6803 / N-1</strain>
    </source>
</reference>
<reference key="2">
    <citation type="journal article" date="1996" name="DNA Res.">
        <title>Sequence analysis of the genome of the unicellular cyanobacterium Synechocystis sp. strain PCC6803. II. Sequence determination of the entire genome and assignment of potential protein-coding regions.</title>
        <authorList>
            <person name="Kaneko T."/>
            <person name="Sato S."/>
            <person name="Kotani H."/>
            <person name="Tanaka A."/>
            <person name="Asamizu E."/>
            <person name="Nakamura Y."/>
            <person name="Miyajima N."/>
            <person name="Hirosawa M."/>
            <person name="Sugiura M."/>
            <person name="Sasamoto S."/>
            <person name="Kimura T."/>
            <person name="Hosouchi T."/>
            <person name="Matsuno A."/>
            <person name="Muraki A."/>
            <person name="Nakazaki N."/>
            <person name="Naruo K."/>
            <person name="Okumura S."/>
            <person name="Shimpo S."/>
            <person name="Takeuchi C."/>
            <person name="Wada T."/>
            <person name="Watanabe A."/>
            <person name="Yamada M."/>
            <person name="Yasuda M."/>
            <person name="Tabata S."/>
        </authorList>
    </citation>
    <scope>NUCLEOTIDE SEQUENCE [LARGE SCALE GENOMIC DNA]</scope>
    <source>
        <strain>ATCC 27184 / PCC 6803 / Kazusa</strain>
    </source>
</reference>
<gene>
    <name evidence="1" type="primary">pstB2</name>
    <name type="ordered locus">sll0684</name>
</gene>
<proteinExistence type="inferred from homology"/>
<dbReference type="EC" id="7.3.2.1" evidence="1"/>
<dbReference type="EMBL" id="BA000022">
    <property type="protein sequence ID" value="BAA10337.1"/>
    <property type="molecule type" value="Genomic_DNA"/>
</dbReference>
<dbReference type="PIR" id="S74419">
    <property type="entry name" value="S74419"/>
</dbReference>
<dbReference type="SMR" id="Q55195"/>
<dbReference type="FunCoup" id="Q55195">
    <property type="interactions" value="200"/>
</dbReference>
<dbReference type="STRING" id="1148.gene:10499837"/>
<dbReference type="PaxDb" id="1148-1001193"/>
<dbReference type="EnsemblBacteria" id="BAA10337">
    <property type="protein sequence ID" value="BAA10337"/>
    <property type="gene ID" value="BAA10337"/>
</dbReference>
<dbReference type="KEGG" id="syn:sll0684"/>
<dbReference type="eggNOG" id="COG1117">
    <property type="taxonomic scope" value="Bacteria"/>
</dbReference>
<dbReference type="InParanoid" id="Q55195"/>
<dbReference type="PhylomeDB" id="Q55195"/>
<dbReference type="Proteomes" id="UP000001425">
    <property type="component" value="Chromosome"/>
</dbReference>
<dbReference type="GO" id="GO:0005886">
    <property type="term" value="C:plasma membrane"/>
    <property type="evidence" value="ECO:0007669"/>
    <property type="project" value="UniProtKB-SubCell"/>
</dbReference>
<dbReference type="GO" id="GO:0005524">
    <property type="term" value="F:ATP binding"/>
    <property type="evidence" value="ECO:0007669"/>
    <property type="project" value="UniProtKB-KW"/>
</dbReference>
<dbReference type="GO" id="GO:0016887">
    <property type="term" value="F:ATP hydrolysis activity"/>
    <property type="evidence" value="ECO:0007669"/>
    <property type="project" value="InterPro"/>
</dbReference>
<dbReference type="GO" id="GO:0015415">
    <property type="term" value="F:ATPase-coupled phosphate ion transmembrane transporter activity"/>
    <property type="evidence" value="ECO:0007669"/>
    <property type="project" value="UniProtKB-EC"/>
</dbReference>
<dbReference type="GO" id="GO:0035435">
    <property type="term" value="P:phosphate ion transmembrane transport"/>
    <property type="evidence" value="ECO:0007669"/>
    <property type="project" value="InterPro"/>
</dbReference>
<dbReference type="CDD" id="cd03260">
    <property type="entry name" value="ABC_PstB_phosphate_transporter"/>
    <property type="match status" value="1"/>
</dbReference>
<dbReference type="Gene3D" id="3.40.50.300">
    <property type="entry name" value="P-loop containing nucleotide triphosphate hydrolases"/>
    <property type="match status" value="1"/>
</dbReference>
<dbReference type="InterPro" id="IPR003593">
    <property type="entry name" value="AAA+_ATPase"/>
</dbReference>
<dbReference type="InterPro" id="IPR003439">
    <property type="entry name" value="ABC_transporter-like_ATP-bd"/>
</dbReference>
<dbReference type="InterPro" id="IPR017871">
    <property type="entry name" value="ABC_transporter-like_CS"/>
</dbReference>
<dbReference type="InterPro" id="IPR027417">
    <property type="entry name" value="P-loop_NTPase"/>
</dbReference>
<dbReference type="InterPro" id="IPR005670">
    <property type="entry name" value="PstB-like"/>
</dbReference>
<dbReference type="NCBIfam" id="TIGR00972">
    <property type="entry name" value="3a0107s01c2"/>
    <property type="match status" value="1"/>
</dbReference>
<dbReference type="PANTHER" id="PTHR43423">
    <property type="entry name" value="ABC TRANSPORTER I FAMILY MEMBER 17"/>
    <property type="match status" value="1"/>
</dbReference>
<dbReference type="PANTHER" id="PTHR43423:SF1">
    <property type="entry name" value="ABC TRANSPORTER I FAMILY MEMBER 17"/>
    <property type="match status" value="1"/>
</dbReference>
<dbReference type="Pfam" id="PF00005">
    <property type="entry name" value="ABC_tran"/>
    <property type="match status" value="1"/>
</dbReference>
<dbReference type="SMART" id="SM00382">
    <property type="entry name" value="AAA"/>
    <property type="match status" value="1"/>
</dbReference>
<dbReference type="SUPFAM" id="SSF52540">
    <property type="entry name" value="P-loop containing nucleoside triphosphate hydrolases"/>
    <property type="match status" value="1"/>
</dbReference>
<dbReference type="PROSITE" id="PS00211">
    <property type="entry name" value="ABC_TRANSPORTER_1"/>
    <property type="match status" value="1"/>
</dbReference>
<dbReference type="PROSITE" id="PS50893">
    <property type="entry name" value="ABC_TRANSPORTER_2"/>
    <property type="match status" value="1"/>
</dbReference>
<dbReference type="PROSITE" id="PS51238">
    <property type="entry name" value="PSTB"/>
    <property type="match status" value="1"/>
</dbReference>
<sequence length="266" mass="29244">MVVSNGVATKGVLEAQGVNVYYGSHLAVKDCNISIPERRVVAFIGPSGCGKSTLLRCFNRMNDLVSIARVEGRITYHGSDIYAPSVDPVGLRCSIGMVFQKANPFPKSIYENIAWGAKLNNFQGDMDELVETSLRRAALWDEVKDKLKASGFSLSGGQQQRLCIARAIAVQPEVILMDEPCSALDPISTLKIEGLMHELKEQFTIVIVTHNMQQASRVSDYTAFFNVESVDRGAKVGSLVEYGPTEEIFQNPLKESTRDYVSGRFG</sequence>
<keyword id="KW-0067">ATP-binding</keyword>
<keyword id="KW-0997">Cell inner membrane</keyword>
<keyword id="KW-1003">Cell membrane</keyword>
<keyword id="KW-0472">Membrane</keyword>
<keyword id="KW-0547">Nucleotide-binding</keyword>
<keyword id="KW-0592">Phosphate transport</keyword>
<keyword id="KW-1185">Reference proteome</keyword>
<keyword id="KW-1278">Translocase</keyword>
<keyword id="KW-0813">Transport</keyword>
<comment type="function">
    <text evidence="1">Part of the ABC transporter complex PstSACB involved in phosphate import. Responsible for energy coupling to the transport system.</text>
</comment>
<comment type="catalytic activity">
    <reaction evidence="1">
        <text>phosphate(out) + ATP + H2O = ADP + 2 phosphate(in) + H(+)</text>
        <dbReference type="Rhea" id="RHEA:24440"/>
        <dbReference type="ChEBI" id="CHEBI:15377"/>
        <dbReference type="ChEBI" id="CHEBI:15378"/>
        <dbReference type="ChEBI" id="CHEBI:30616"/>
        <dbReference type="ChEBI" id="CHEBI:43474"/>
        <dbReference type="ChEBI" id="CHEBI:456216"/>
        <dbReference type="EC" id="7.3.2.1"/>
    </reaction>
</comment>
<comment type="subunit">
    <text evidence="1">The complex is composed of two ATP-binding proteins (PstB), two transmembrane proteins (PstC and PstA) and a solute-binding protein (PstS).</text>
</comment>
<comment type="subcellular location">
    <subcellularLocation>
        <location evidence="1">Cell inner membrane</location>
        <topology evidence="1">Peripheral membrane protein</topology>
    </subcellularLocation>
</comment>
<comment type="similarity">
    <text evidence="1">Belongs to the ABC transporter superfamily. Phosphate importer (TC 3.A.1.7) family.</text>
</comment>
<protein>
    <recommendedName>
        <fullName evidence="1">Phosphate import ATP-binding protein PstB 2</fullName>
        <ecNumber evidence="1">7.3.2.1</ecNumber>
    </recommendedName>
    <alternativeName>
        <fullName evidence="1">ABC phosphate transporter 2</fullName>
    </alternativeName>
    <alternativeName>
        <fullName evidence="1">Phosphate-transporting ATPase 2</fullName>
    </alternativeName>
</protein>
<organism>
    <name type="scientific">Synechocystis sp. (strain ATCC 27184 / PCC 6803 / Kazusa)</name>
    <dbReference type="NCBI Taxonomy" id="1111708"/>
    <lineage>
        <taxon>Bacteria</taxon>
        <taxon>Bacillati</taxon>
        <taxon>Cyanobacteriota</taxon>
        <taxon>Cyanophyceae</taxon>
        <taxon>Synechococcales</taxon>
        <taxon>Merismopediaceae</taxon>
        <taxon>Synechocystis</taxon>
    </lineage>
</organism>
<accession>Q55195</accession>
<feature type="chain" id="PRO_0000092916" description="Phosphate import ATP-binding protein PstB 2">
    <location>
        <begin position="1"/>
        <end position="266"/>
    </location>
</feature>
<feature type="domain" description="ABC transporter" evidence="1">
    <location>
        <begin position="13"/>
        <end position="252"/>
    </location>
</feature>
<feature type="binding site" evidence="1">
    <location>
        <begin position="45"/>
        <end position="52"/>
    </location>
    <ligand>
        <name>ATP</name>
        <dbReference type="ChEBI" id="CHEBI:30616"/>
    </ligand>
</feature>
<name>PSTB2_SYNY3</name>
<evidence type="ECO:0000255" key="1">
    <source>
        <dbReference type="HAMAP-Rule" id="MF_01702"/>
    </source>
</evidence>